<organism>
    <name type="scientific">Salmonella heidelberg (strain SL476)</name>
    <dbReference type="NCBI Taxonomy" id="454169"/>
    <lineage>
        <taxon>Bacteria</taxon>
        <taxon>Pseudomonadati</taxon>
        <taxon>Pseudomonadota</taxon>
        <taxon>Gammaproteobacteria</taxon>
        <taxon>Enterobacterales</taxon>
        <taxon>Enterobacteriaceae</taxon>
        <taxon>Salmonella</taxon>
    </lineage>
</organism>
<proteinExistence type="inferred from homology"/>
<dbReference type="EMBL" id="CP001120">
    <property type="protein sequence ID" value="ACF68570.1"/>
    <property type="molecule type" value="Genomic_DNA"/>
</dbReference>
<dbReference type="RefSeq" id="WP_000156280.1">
    <property type="nucleotide sequence ID" value="NC_011083.1"/>
</dbReference>
<dbReference type="KEGG" id="seh:SeHA_C2033"/>
<dbReference type="HOGENOM" id="CLU_133645_0_0_6"/>
<dbReference type="Proteomes" id="UP000001866">
    <property type="component" value="Chromosome"/>
</dbReference>
<dbReference type="GO" id="GO:0005886">
    <property type="term" value="C:plasma membrane"/>
    <property type="evidence" value="ECO:0007669"/>
    <property type="project" value="UniProtKB-SubCell"/>
</dbReference>
<dbReference type="HAMAP" id="MF_01071">
    <property type="entry name" value="UPF0266"/>
    <property type="match status" value="1"/>
</dbReference>
<dbReference type="InterPro" id="IPR009328">
    <property type="entry name" value="DUF986"/>
</dbReference>
<dbReference type="NCBIfam" id="NF002791">
    <property type="entry name" value="PRK02913.1"/>
    <property type="match status" value="1"/>
</dbReference>
<dbReference type="Pfam" id="PF06173">
    <property type="entry name" value="DUF986"/>
    <property type="match status" value="1"/>
</dbReference>
<dbReference type="PIRSF" id="PIRSF020687">
    <property type="entry name" value="UCP020687"/>
    <property type="match status" value="1"/>
</dbReference>
<evidence type="ECO:0000255" key="1">
    <source>
        <dbReference type="HAMAP-Rule" id="MF_01071"/>
    </source>
</evidence>
<comment type="subcellular location">
    <subcellularLocation>
        <location evidence="1">Cell inner membrane</location>
        <topology evidence="1">Multi-pass membrane protein</topology>
    </subcellularLocation>
</comment>
<comment type="similarity">
    <text evidence="1">Belongs to the UPF0266 family.</text>
</comment>
<keyword id="KW-0997">Cell inner membrane</keyword>
<keyword id="KW-1003">Cell membrane</keyword>
<keyword id="KW-0472">Membrane</keyword>
<keyword id="KW-0812">Transmembrane</keyword>
<keyword id="KW-1133">Transmembrane helix</keyword>
<protein>
    <recommendedName>
        <fullName evidence="1">UPF0266 membrane protein YobD</fullName>
    </recommendedName>
</protein>
<sequence>MTITDLVLILFIAALLAYALYDQFIMPRRNGPTLLSIALLRRGRVDSVIFVGLVAILIYNNVTSHGAQMTTWLLSALALMGFYIFWIRTPRIIFKQRGFFFANVWIEYNRIKEMNLSEDGVLVMQLEQRRLLIRVRNIDDLEKIYKLLIENQ</sequence>
<reference key="1">
    <citation type="journal article" date="2011" name="J. Bacteriol.">
        <title>Comparative genomics of 28 Salmonella enterica isolates: evidence for CRISPR-mediated adaptive sublineage evolution.</title>
        <authorList>
            <person name="Fricke W.F."/>
            <person name="Mammel M.K."/>
            <person name="McDermott P.F."/>
            <person name="Tartera C."/>
            <person name="White D.G."/>
            <person name="Leclerc J.E."/>
            <person name="Ravel J."/>
            <person name="Cebula T.A."/>
        </authorList>
    </citation>
    <scope>NUCLEOTIDE SEQUENCE [LARGE SCALE GENOMIC DNA]</scope>
    <source>
        <strain>SL476</strain>
    </source>
</reference>
<accession>B4TKG4</accession>
<gene>
    <name evidence="1" type="primary">yobD</name>
    <name type="ordered locus">SeHA_C2033</name>
</gene>
<feature type="chain" id="PRO_1000136648" description="UPF0266 membrane protein YobD">
    <location>
        <begin position="1"/>
        <end position="152"/>
    </location>
</feature>
<feature type="transmembrane region" description="Helical" evidence="1">
    <location>
        <begin position="6"/>
        <end position="26"/>
    </location>
</feature>
<feature type="transmembrane region" description="Helical" evidence="1">
    <location>
        <begin position="45"/>
        <end position="65"/>
    </location>
</feature>
<feature type="transmembrane region" description="Helical" evidence="1">
    <location>
        <begin position="67"/>
        <end position="87"/>
    </location>
</feature>
<name>YOBD_SALHS</name>